<protein>
    <recommendedName>
        <fullName>FERM domain-containing protein 8</fullName>
    </recommendedName>
    <alternativeName>
        <fullName evidence="7">iRhom tail-associated protein</fullName>
        <shortName evidence="7">iTAP</shortName>
    </alternativeName>
</protein>
<reference key="1">
    <citation type="journal article" date="2005" name="Science">
        <title>The transcriptional landscape of the mammalian genome.</title>
        <authorList>
            <person name="Carninci P."/>
            <person name="Kasukawa T."/>
            <person name="Katayama S."/>
            <person name="Gough J."/>
            <person name="Frith M.C."/>
            <person name="Maeda N."/>
            <person name="Oyama R."/>
            <person name="Ravasi T."/>
            <person name="Lenhard B."/>
            <person name="Wells C."/>
            <person name="Kodzius R."/>
            <person name="Shimokawa K."/>
            <person name="Bajic V.B."/>
            <person name="Brenner S.E."/>
            <person name="Batalov S."/>
            <person name="Forrest A.R."/>
            <person name="Zavolan M."/>
            <person name="Davis M.J."/>
            <person name="Wilming L.G."/>
            <person name="Aidinis V."/>
            <person name="Allen J.E."/>
            <person name="Ambesi-Impiombato A."/>
            <person name="Apweiler R."/>
            <person name="Aturaliya R.N."/>
            <person name="Bailey T.L."/>
            <person name="Bansal M."/>
            <person name="Baxter L."/>
            <person name="Beisel K.W."/>
            <person name="Bersano T."/>
            <person name="Bono H."/>
            <person name="Chalk A.M."/>
            <person name="Chiu K.P."/>
            <person name="Choudhary V."/>
            <person name="Christoffels A."/>
            <person name="Clutterbuck D.R."/>
            <person name="Crowe M.L."/>
            <person name="Dalla E."/>
            <person name="Dalrymple B.P."/>
            <person name="de Bono B."/>
            <person name="Della Gatta G."/>
            <person name="di Bernardo D."/>
            <person name="Down T."/>
            <person name="Engstrom P."/>
            <person name="Fagiolini M."/>
            <person name="Faulkner G."/>
            <person name="Fletcher C.F."/>
            <person name="Fukushima T."/>
            <person name="Furuno M."/>
            <person name="Futaki S."/>
            <person name="Gariboldi M."/>
            <person name="Georgii-Hemming P."/>
            <person name="Gingeras T.R."/>
            <person name="Gojobori T."/>
            <person name="Green R.E."/>
            <person name="Gustincich S."/>
            <person name="Harbers M."/>
            <person name="Hayashi Y."/>
            <person name="Hensch T.K."/>
            <person name="Hirokawa N."/>
            <person name="Hill D."/>
            <person name="Huminiecki L."/>
            <person name="Iacono M."/>
            <person name="Ikeo K."/>
            <person name="Iwama A."/>
            <person name="Ishikawa T."/>
            <person name="Jakt M."/>
            <person name="Kanapin A."/>
            <person name="Katoh M."/>
            <person name="Kawasawa Y."/>
            <person name="Kelso J."/>
            <person name="Kitamura H."/>
            <person name="Kitano H."/>
            <person name="Kollias G."/>
            <person name="Krishnan S.P."/>
            <person name="Kruger A."/>
            <person name="Kummerfeld S.K."/>
            <person name="Kurochkin I.V."/>
            <person name="Lareau L.F."/>
            <person name="Lazarevic D."/>
            <person name="Lipovich L."/>
            <person name="Liu J."/>
            <person name="Liuni S."/>
            <person name="McWilliam S."/>
            <person name="Madan Babu M."/>
            <person name="Madera M."/>
            <person name="Marchionni L."/>
            <person name="Matsuda H."/>
            <person name="Matsuzawa S."/>
            <person name="Miki H."/>
            <person name="Mignone F."/>
            <person name="Miyake S."/>
            <person name="Morris K."/>
            <person name="Mottagui-Tabar S."/>
            <person name="Mulder N."/>
            <person name="Nakano N."/>
            <person name="Nakauchi H."/>
            <person name="Ng P."/>
            <person name="Nilsson R."/>
            <person name="Nishiguchi S."/>
            <person name="Nishikawa S."/>
            <person name="Nori F."/>
            <person name="Ohara O."/>
            <person name="Okazaki Y."/>
            <person name="Orlando V."/>
            <person name="Pang K.C."/>
            <person name="Pavan W.J."/>
            <person name="Pavesi G."/>
            <person name="Pesole G."/>
            <person name="Petrovsky N."/>
            <person name="Piazza S."/>
            <person name="Reed J."/>
            <person name="Reid J.F."/>
            <person name="Ring B.Z."/>
            <person name="Ringwald M."/>
            <person name="Rost B."/>
            <person name="Ruan Y."/>
            <person name="Salzberg S.L."/>
            <person name="Sandelin A."/>
            <person name="Schneider C."/>
            <person name="Schoenbach C."/>
            <person name="Sekiguchi K."/>
            <person name="Semple C.A."/>
            <person name="Seno S."/>
            <person name="Sessa L."/>
            <person name="Sheng Y."/>
            <person name="Shibata Y."/>
            <person name="Shimada H."/>
            <person name="Shimada K."/>
            <person name="Silva D."/>
            <person name="Sinclair B."/>
            <person name="Sperling S."/>
            <person name="Stupka E."/>
            <person name="Sugiura K."/>
            <person name="Sultana R."/>
            <person name="Takenaka Y."/>
            <person name="Taki K."/>
            <person name="Tammoja K."/>
            <person name="Tan S.L."/>
            <person name="Tang S."/>
            <person name="Taylor M.S."/>
            <person name="Tegner J."/>
            <person name="Teichmann S.A."/>
            <person name="Ueda H.R."/>
            <person name="van Nimwegen E."/>
            <person name="Verardo R."/>
            <person name="Wei C.L."/>
            <person name="Yagi K."/>
            <person name="Yamanishi H."/>
            <person name="Zabarovsky E."/>
            <person name="Zhu S."/>
            <person name="Zimmer A."/>
            <person name="Hide W."/>
            <person name="Bult C."/>
            <person name="Grimmond S.M."/>
            <person name="Teasdale R.D."/>
            <person name="Liu E.T."/>
            <person name="Brusic V."/>
            <person name="Quackenbush J."/>
            <person name="Wahlestedt C."/>
            <person name="Mattick J.S."/>
            <person name="Hume D.A."/>
            <person name="Kai C."/>
            <person name="Sasaki D."/>
            <person name="Tomaru Y."/>
            <person name="Fukuda S."/>
            <person name="Kanamori-Katayama M."/>
            <person name="Suzuki M."/>
            <person name="Aoki J."/>
            <person name="Arakawa T."/>
            <person name="Iida J."/>
            <person name="Imamura K."/>
            <person name="Itoh M."/>
            <person name="Kato T."/>
            <person name="Kawaji H."/>
            <person name="Kawagashira N."/>
            <person name="Kawashima T."/>
            <person name="Kojima M."/>
            <person name="Kondo S."/>
            <person name="Konno H."/>
            <person name="Nakano K."/>
            <person name="Ninomiya N."/>
            <person name="Nishio T."/>
            <person name="Okada M."/>
            <person name="Plessy C."/>
            <person name="Shibata K."/>
            <person name="Shiraki T."/>
            <person name="Suzuki S."/>
            <person name="Tagami M."/>
            <person name="Waki K."/>
            <person name="Watahiki A."/>
            <person name="Okamura-Oho Y."/>
            <person name="Suzuki H."/>
            <person name="Kawai J."/>
            <person name="Hayashizaki Y."/>
        </authorList>
    </citation>
    <scope>NUCLEOTIDE SEQUENCE [LARGE SCALE MRNA]</scope>
    <source>
        <strain>C57BL/6J</strain>
        <strain>NOD</strain>
        <tissue>Lung</tissue>
        <tissue>Spinal ganglion</tissue>
        <tissue>Thymus</tissue>
    </source>
</reference>
<reference key="2">
    <citation type="journal article" date="2004" name="Genome Res.">
        <title>The status, quality, and expansion of the NIH full-length cDNA project: the Mammalian Gene Collection (MGC).</title>
        <authorList>
            <consortium name="The MGC Project Team"/>
        </authorList>
    </citation>
    <scope>NUCLEOTIDE SEQUENCE</scope>
    <source>
        <strain>FVB/N</strain>
        <tissue>Mammary tumor</tissue>
    </source>
</reference>
<reference key="3">
    <citation type="journal article" date="2009" name="Immunity">
        <title>The phagosomal proteome in interferon-gamma-activated macrophages.</title>
        <authorList>
            <person name="Trost M."/>
            <person name="English L."/>
            <person name="Lemieux S."/>
            <person name="Courcelles M."/>
            <person name="Desjardins M."/>
            <person name="Thibault P."/>
        </authorList>
    </citation>
    <scope>IDENTIFICATION BY MASS SPECTROMETRY [LARGE SCALE ANALYSIS]</scope>
</reference>
<reference key="4">
    <citation type="journal article" date="2010" name="Cell">
        <title>A tissue-specific atlas of mouse protein phosphorylation and expression.</title>
        <authorList>
            <person name="Huttlin E.L."/>
            <person name="Jedrychowski M.P."/>
            <person name="Elias J.E."/>
            <person name="Goswami T."/>
            <person name="Rad R."/>
            <person name="Beausoleil S.A."/>
            <person name="Villen J."/>
            <person name="Haas W."/>
            <person name="Sowa M.E."/>
            <person name="Gygi S.P."/>
        </authorList>
    </citation>
    <scope>PHOSPHORYLATION [LARGE SCALE ANALYSIS] AT THR-420</scope>
    <scope>IDENTIFICATION BY MASS SPECTROMETRY [LARGE SCALE ANALYSIS]</scope>
    <source>
        <tissue>Kidney</tissue>
        <tissue>Lung</tissue>
        <tissue>Spleen</tissue>
        <tissue>Testis</tissue>
    </source>
</reference>
<reference key="5">
    <citation type="journal article" date="2018" name="Elife">
        <title>iTAP, a novel iRhom interactor, controls TNF secretion by policing the stability of iRhom/TACE.</title>
        <authorList>
            <person name="Oikonomidi I."/>
            <person name="Burbridge E."/>
            <person name="Cavadas M."/>
            <person name="Sullivan G."/>
            <person name="Collis B."/>
            <person name="Naegele H."/>
            <person name="Clancy D."/>
            <person name="Brezinova J."/>
            <person name="Hu T."/>
            <person name="Bileck A."/>
            <person name="Gerner C."/>
            <person name="Bolado A."/>
            <person name="von Kriegsheim A."/>
            <person name="Martin S.J."/>
            <person name="Steinberg F."/>
            <person name="Strisovsky K."/>
            <person name="Adrain C."/>
        </authorList>
    </citation>
    <scope>FUNCTION</scope>
    <scope>TISSUE SPECIFICITY</scope>
</reference>
<reference key="6">
    <citation type="journal article" date="2018" name="Elife">
        <title>FRMD8 promotes inflammatory and growth factor signalling by stabilising the iRhom/ADAM17 sheddase complex.</title>
        <authorList>
            <person name="Kuenzel U."/>
            <person name="Grieve A.G."/>
            <person name="Meng Y."/>
            <person name="Sieber B."/>
            <person name="Cowley S.A."/>
            <person name="Freeman M."/>
        </authorList>
    </citation>
    <scope>FUNCTION</scope>
    <scope>INTERACTION WITH RHBDF2</scope>
    <scope>DISRUPTION PHENOTYPE</scope>
</reference>
<accession>Q3UFK8</accession>
<accession>Q8C7U3</accession>
<accession>Q8C7U5</accession>
<accession>Q99KB3</accession>
<accession>Q9CSY6</accession>
<accession>Q9DC30</accession>
<organism>
    <name type="scientific">Mus musculus</name>
    <name type="common">Mouse</name>
    <dbReference type="NCBI Taxonomy" id="10090"/>
    <lineage>
        <taxon>Eukaryota</taxon>
        <taxon>Metazoa</taxon>
        <taxon>Chordata</taxon>
        <taxon>Craniata</taxon>
        <taxon>Vertebrata</taxon>
        <taxon>Euteleostomi</taxon>
        <taxon>Mammalia</taxon>
        <taxon>Eutheria</taxon>
        <taxon>Euarchontoglires</taxon>
        <taxon>Glires</taxon>
        <taxon>Rodentia</taxon>
        <taxon>Myomorpha</taxon>
        <taxon>Muroidea</taxon>
        <taxon>Muridae</taxon>
        <taxon>Murinae</taxon>
        <taxon>Mus</taxon>
        <taxon>Mus</taxon>
    </lineage>
</organism>
<comment type="function">
    <text evidence="2 5">Promotes the cell surface stability of iRhom1/RHBDF1 and iRhom2/RHBDF2 and prevents their degradation via the endolysosomal pathway (PubMed:29897333). By acting on iRhoms, involved in ADAM17-mediated shedding of TNF, amphiregulin/AREG, HBEGF and TGFA from the cell surface (By similarity). Negatively regulates Wnt signaling, possibly by antagonizing the recruitment of AXIN1 to LRP6 (By similarity).</text>
</comment>
<comment type="subunit">
    <text evidence="2 6">Interacts with iRhom proteins, including iRhom2/RHBDF2 (via cytoplasmic N-termini); this interaction leads to mutual protein stabilization (PubMed:29897336). Interacts with LRP6; this interaction affects LRP6-binding to AXIN1 (By similarity).</text>
</comment>
<comment type="subcellular location">
    <subcellularLocation>
        <location evidence="2">Cytoplasm</location>
        <location evidence="2">Cytosol</location>
    </subcellularLocation>
    <subcellularLocation>
        <location evidence="2">Cell membrane</location>
    </subcellularLocation>
</comment>
<comment type="tissue specificity">
    <text evidence="5">Widely expressed (at protein level).</text>
</comment>
<comment type="disruption phenotype">
    <text evidence="6">Mutant mice are viable and fertile.</text>
</comment>
<name>FRMD8_MOUSE</name>
<keyword id="KW-0007">Acetylation</keyword>
<keyword id="KW-1003">Cell membrane</keyword>
<keyword id="KW-0963">Cytoplasm</keyword>
<keyword id="KW-0472">Membrane</keyword>
<keyword id="KW-0597">Phosphoprotein</keyword>
<keyword id="KW-1185">Reference proteome</keyword>
<sequence>MEGAEGNAGQPGPAERSHRSSVSSVGARAADVLVYLADDTVVPLAVENLSSISAHELHRAVREVLQLPDVALEAFALWLVSPLLEVQLKPKHQPYKLGRQWPELLLRFTNASDDDVAMDEPSLQFRRNVFFPRRRELQIHDEEVLRLLYEEAKGNVLTARYPCDLEDCEVLGGLVCRVQLGPYQPGQPAACTLREKLDSFLPAHLCKRGHGLFAAFRGRGAKTGPGEQGLLNAYRQVKEVTGNNSEREATLGSHYRAYLLKCHELPFYGCAFFHGEVDKPAQGFLHRGGRKPVTVAISLEGVHVIDNREKHVLLGLRFQELSWDHTSPEEEEPVLWLEFDGDSEGTPVNKLLRIYSKQAELMSGLIEYCIELSQAAEPTLSQESASGPHEAPSPSPPPTQRPKLRRQGSVVCSRIQHLSTIDYVEDGKGIKRVKPKRTTSFFSRQLSSSQGSYTVVQPTDDSLEQS</sequence>
<evidence type="ECO:0000250" key="1">
    <source>
        <dbReference type="UniProtKB" id="Q5U2R3"/>
    </source>
</evidence>
<evidence type="ECO:0000250" key="2">
    <source>
        <dbReference type="UniProtKB" id="Q9BZ67"/>
    </source>
</evidence>
<evidence type="ECO:0000255" key="3">
    <source>
        <dbReference type="PROSITE-ProRule" id="PRU00084"/>
    </source>
</evidence>
<evidence type="ECO:0000256" key="4">
    <source>
        <dbReference type="SAM" id="MobiDB-lite"/>
    </source>
</evidence>
<evidence type="ECO:0000269" key="5">
    <source>
    </source>
</evidence>
<evidence type="ECO:0000269" key="6">
    <source>
    </source>
</evidence>
<evidence type="ECO:0000303" key="7">
    <source>
    </source>
</evidence>
<evidence type="ECO:0000305" key="8"/>
<evidence type="ECO:0007744" key="9">
    <source>
    </source>
</evidence>
<gene>
    <name type="primary">Frmd8</name>
</gene>
<feature type="chain" id="PRO_0000295779" description="FERM domain-containing protein 8">
    <location>
        <begin position="1"/>
        <end position="466"/>
    </location>
</feature>
<feature type="domain" description="FERM" evidence="3">
    <location>
        <begin position="30"/>
        <end position="377"/>
    </location>
</feature>
<feature type="region of interest" description="Disordered" evidence="4">
    <location>
        <begin position="1"/>
        <end position="21"/>
    </location>
</feature>
<feature type="region of interest" description="Disordered" evidence="4">
    <location>
        <begin position="379"/>
        <end position="409"/>
    </location>
</feature>
<feature type="region of interest" description="Disordered" evidence="4">
    <location>
        <begin position="442"/>
        <end position="466"/>
    </location>
</feature>
<feature type="compositionally biased region" description="Pro residues" evidence="4">
    <location>
        <begin position="391"/>
        <end position="400"/>
    </location>
</feature>
<feature type="compositionally biased region" description="Polar residues" evidence="4">
    <location>
        <begin position="442"/>
        <end position="460"/>
    </location>
</feature>
<feature type="modified residue" description="N-acetylmethionine" evidence="2">
    <location>
        <position position="1"/>
    </location>
</feature>
<feature type="modified residue" description="Phosphoserine" evidence="1">
    <location>
        <position position="24"/>
    </location>
</feature>
<feature type="modified residue" description="Phosphoserine" evidence="2">
    <location>
        <position position="384"/>
    </location>
</feature>
<feature type="modified residue" description="Phosphoserine" evidence="2">
    <location>
        <position position="409"/>
    </location>
</feature>
<feature type="modified residue" description="Phosphothreonine" evidence="9">
    <location>
        <position position="420"/>
    </location>
</feature>
<feature type="modified residue" description="Phosphoserine" evidence="2">
    <location>
        <position position="440"/>
    </location>
</feature>
<feature type="modified residue" description="Phosphoserine" evidence="2">
    <location>
        <position position="447"/>
    </location>
</feature>
<feature type="sequence conflict" description="In Ref. 1; BAE28552 and 2; AAH04765." evidence="8" ref="1 2">
    <original>N</original>
    <variation>D</variation>
    <location>
        <position position="110"/>
    </location>
</feature>
<feature type="sequence conflict" description="In Ref. 1; BAC33626." evidence="8" ref="1">
    <original>H</original>
    <variation>Y</variation>
    <location>
        <position position="210"/>
    </location>
</feature>
<feature type="sequence conflict" description="In Ref. 1; BAB27763." evidence="8" ref="1">
    <original>L</original>
    <variation>I</variation>
    <location>
        <position position="260"/>
    </location>
</feature>
<feature type="sequence conflict" description="In Ref. 1; BAE28552." evidence="8" ref="1">
    <original>P</original>
    <variation>R</variation>
    <location>
        <position position="392"/>
    </location>
</feature>
<feature type="sequence conflict" description="In Ref. 1; BAC33620." evidence="8" ref="1">
    <original>T</original>
    <variation>A</variation>
    <location>
        <position position="399"/>
    </location>
</feature>
<dbReference type="EMBL" id="AK011659">
    <property type="protein sequence ID" value="BAB27763.1"/>
    <property type="molecule type" value="mRNA"/>
</dbReference>
<dbReference type="EMBL" id="AK004603">
    <property type="protein sequence ID" value="BAB23402.1"/>
    <property type="molecule type" value="mRNA"/>
</dbReference>
<dbReference type="EMBL" id="AK083902">
    <property type="protein sequence ID" value="BAC39054.1"/>
    <property type="molecule type" value="mRNA"/>
</dbReference>
<dbReference type="EMBL" id="AK088639">
    <property type="protein sequence ID" value="BAC40471.1"/>
    <property type="molecule type" value="mRNA"/>
</dbReference>
<dbReference type="EMBL" id="AK049224">
    <property type="protein sequence ID" value="BAC33620.1"/>
    <property type="molecule type" value="mRNA"/>
</dbReference>
<dbReference type="EMBL" id="AK049233">
    <property type="protein sequence ID" value="BAC33626.1"/>
    <property type="molecule type" value="mRNA"/>
</dbReference>
<dbReference type="EMBL" id="AK148434">
    <property type="protein sequence ID" value="BAE28552.1"/>
    <property type="molecule type" value="mRNA"/>
</dbReference>
<dbReference type="EMBL" id="BC004765">
    <property type="protein sequence ID" value="AAH04765.1"/>
    <property type="molecule type" value="mRNA"/>
</dbReference>
<dbReference type="CCDS" id="CCDS29481.1"/>
<dbReference type="RefSeq" id="NP_080445.1">
    <property type="nucleotide sequence ID" value="NM_026169.4"/>
</dbReference>
<dbReference type="RefSeq" id="XP_006531891.1">
    <property type="nucleotide sequence ID" value="XM_006531828.3"/>
</dbReference>
<dbReference type="SMR" id="Q3UFK8"/>
<dbReference type="FunCoup" id="Q3UFK8">
    <property type="interactions" value="2328"/>
</dbReference>
<dbReference type="STRING" id="10090.ENSMUSP00000025728"/>
<dbReference type="iPTMnet" id="Q3UFK8"/>
<dbReference type="PhosphoSitePlus" id="Q3UFK8"/>
<dbReference type="jPOST" id="Q3UFK8"/>
<dbReference type="PaxDb" id="10090-ENSMUSP00000025728"/>
<dbReference type="PeptideAtlas" id="Q3UFK8"/>
<dbReference type="ProteomicsDB" id="267629"/>
<dbReference type="Pumba" id="Q3UFK8"/>
<dbReference type="Antibodypedia" id="1109">
    <property type="antibodies" value="122 antibodies from 18 providers"/>
</dbReference>
<dbReference type="DNASU" id="67457"/>
<dbReference type="Ensembl" id="ENSMUST00000025728.13">
    <property type="protein sequence ID" value="ENSMUSP00000025728.7"/>
    <property type="gene ID" value="ENSMUSG00000024816.13"/>
</dbReference>
<dbReference type="GeneID" id="67457"/>
<dbReference type="KEGG" id="mmu:67457"/>
<dbReference type="UCSC" id="uc008gfn.1">
    <property type="organism name" value="mouse"/>
</dbReference>
<dbReference type="AGR" id="MGI:1914707"/>
<dbReference type="CTD" id="83786"/>
<dbReference type="MGI" id="MGI:1914707">
    <property type="gene designation" value="Frmd8"/>
</dbReference>
<dbReference type="VEuPathDB" id="HostDB:ENSMUSG00000024816"/>
<dbReference type="eggNOG" id="KOG4335">
    <property type="taxonomic scope" value="Eukaryota"/>
</dbReference>
<dbReference type="GeneTree" id="ENSGT00530000063721"/>
<dbReference type="HOGENOM" id="CLU_032351_0_0_1"/>
<dbReference type="InParanoid" id="Q3UFK8"/>
<dbReference type="OMA" id="GCAFFYG"/>
<dbReference type="OrthoDB" id="2142533at2759"/>
<dbReference type="PhylomeDB" id="Q3UFK8"/>
<dbReference type="TreeFam" id="TF317921"/>
<dbReference type="BioGRID-ORCS" id="67457">
    <property type="hits" value="1 hit in 76 CRISPR screens"/>
</dbReference>
<dbReference type="ChiTaRS" id="Frmd8">
    <property type="organism name" value="mouse"/>
</dbReference>
<dbReference type="PRO" id="PR:Q3UFK8"/>
<dbReference type="Proteomes" id="UP000000589">
    <property type="component" value="Chromosome 19"/>
</dbReference>
<dbReference type="RNAct" id="Q3UFK8">
    <property type="molecule type" value="protein"/>
</dbReference>
<dbReference type="Bgee" id="ENSMUSG00000024816">
    <property type="expression patterns" value="Expressed in granulocyte and 253 other cell types or tissues"/>
</dbReference>
<dbReference type="ExpressionAtlas" id="Q3UFK8">
    <property type="expression patterns" value="baseline and differential"/>
</dbReference>
<dbReference type="GO" id="GO:0034451">
    <property type="term" value="C:centriolar satellite"/>
    <property type="evidence" value="ECO:0007669"/>
    <property type="project" value="Ensembl"/>
</dbReference>
<dbReference type="GO" id="GO:0005737">
    <property type="term" value="C:cytoplasm"/>
    <property type="evidence" value="ECO:0000266"/>
    <property type="project" value="MGI"/>
</dbReference>
<dbReference type="GO" id="GO:0005829">
    <property type="term" value="C:cytosol"/>
    <property type="evidence" value="ECO:0000250"/>
    <property type="project" value="UniProtKB"/>
</dbReference>
<dbReference type="GO" id="GO:0005654">
    <property type="term" value="C:nucleoplasm"/>
    <property type="evidence" value="ECO:0007669"/>
    <property type="project" value="Ensembl"/>
</dbReference>
<dbReference type="GO" id="GO:0005634">
    <property type="term" value="C:nucleus"/>
    <property type="evidence" value="ECO:0000266"/>
    <property type="project" value="MGI"/>
</dbReference>
<dbReference type="GO" id="GO:0005886">
    <property type="term" value="C:plasma membrane"/>
    <property type="evidence" value="ECO:0000250"/>
    <property type="project" value="UniProtKB"/>
</dbReference>
<dbReference type="GO" id="GO:0032760">
    <property type="term" value="P:positive regulation of tumor necrosis factor production"/>
    <property type="evidence" value="ECO:0000250"/>
    <property type="project" value="UniProtKB"/>
</dbReference>
<dbReference type="GO" id="GO:0072659">
    <property type="term" value="P:protein localization to plasma membrane"/>
    <property type="evidence" value="ECO:0000315"/>
    <property type="project" value="MGI"/>
</dbReference>
<dbReference type="CDD" id="cd14473">
    <property type="entry name" value="FERM_B-lobe"/>
    <property type="match status" value="1"/>
</dbReference>
<dbReference type="FunFam" id="1.20.80.10:FF:000023">
    <property type="entry name" value="FERM domain containing 8"/>
    <property type="match status" value="1"/>
</dbReference>
<dbReference type="FunFam" id="2.30.29.30:FF:000216">
    <property type="entry name" value="FERM domain-containing protein 8"/>
    <property type="match status" value="1"/>
</dbReference>
<dbReference type="FunFam" id="3.10.20.90:FF:000191">
    <property type="entry name" value="FERM domain-containing protein 8"/>
    <property type="match status" value="1"/>
</dbReference>
<dbReference type="Gene3D" id="1.20.80.10">
    <property type="match status" value="1"/>
</dbReference>
<dbReference type="Gene3D" id="3.10.20.90">
    <property type="entry name" value="Phosphatidylinositol 3-kinase Catalytic Subunit, Chain A, domain 1"/>
    <property type="match status" value="1"/>
</dbReference>
<dbReference type="Gene3D" id="2.30.29.30">
    <property type="entry name" value="Pleckstrin-homology domain (PH domain)/Phosphotyrosine-binding domain (PTB)"/>
    <property type="match status" value="1"/>
</dbReference>
<dbReference type="InterPro" id="IPR019749">
    <property type="entry name" value="Band_41_domain"/>
</dbReference>
<dbReference type="InterPro" id="IPR014352">
    <property type="entry name" value="FERM/acyl-CoA-bd_prot_sf"/>
</dbReference>
<dbReference type="InterPro" id="IPR035963">
    <property type="entry name" value="FERM_2"/>
</dbReference>
<dbReference type="InterPro" id="IPR019748">
    <property type="entry name" value="FERM_central"/>
</dbReference>
<dbReference type="InterPro" id="IPR000299">
    <property type="entry name" value="FERM_domain"/>
</dbReference>
<dbReference type="InterPro" id="IPR051594">
    <property type="entry name" value="KRIT1/FRMD8"/>
</dbReference>
<dbReference type="InterPro" id="IPR011993">
    <property type="entry name" value="PH-like_dom_sf"/>
</dbReference>
<dbReference type="PANTHER" id="PTHR13283:SF10">
    <property type="entry name" value="FERM DOMAIN-CONTAINING PROTEIN 8"/>
    <property type="match status" value="1"/>
</dbReference>
<dbReference type="PANTHER" id="PTHR13283">
    <property type="entry name" value="KREV INTERACTION TRAPPED 1-RELATED"/>
    <property type="match status" value="1"/>
</dbReference>
<dbReference type="Pfam" id="PF00373">
    <property type="entry name" value="FERM_M"/>
    <property type="match status" value="1"/>
</dbReference>
<dbReference type="Pfam" id="PF24522">
    <property type="entry name" value="KRIT1_FRMD8_FERM_C"/>
    <property type="match status" value="1"/>
</dbReference>
<dbReference type="SMART" id="SM00295">
    <property type="entry name" value="B41"/>
    <property type="match status" value="1"/>
</dbReference>
<dbReference type="SUPFAM" id="SSF47031">
    <property type="entry name" value="Second domain of FERM"/>
    <property type="match status" value="1"/>
</dbReference>
<dbReference type="PROSITE" id="PS50057">
    <property type="entry name" value="FERM_3"/>
    <property type="match status" value="1"/>
</dbReference>
<proteinExistence type="evidence at protein level"/>